<organism>
    <name type="scientific">Sorangium cellulosum (strain So ce56)</name>
    <name type="common">Polyangium cellulosum (strain So ce56)</name>
    <dbReference type="NCBI Taxonomy" id="448385"/>
    <lineage>
        <taxon>Bacteria</taxon>
        <taxon>Pseudomonadati</taxon>
        <taxon>Myxococcota</taxon>
        <taxon>Polyangia</taxon>
        <taxon>Polyangiales</taxon>
        <taxon>Polyangiaceae</taxon>
        <taxon>Sorangium</taxon>
    </lineage>
</organism>
<reference key="1">
    <citation type="journal article" date="2007" name="Nat. Biotechnol.">
        <title>Complete genome sequence of the myxobacterium Sorangium cellulosum.</title>
        <authorList>
            <person name="Schneiker S."/>
            <person name="Perlova O."/>
            <person name="Kaiser O."/>
            <person name="Gerth K."/>
            <person name="Alici A."/>
            <person name="Altmeyer M.O."/>
            <person name="Bartels D."/>
            <person name="Bekel T."/>
            <person name="Beyer S."/>
            <person name="Bode E."/>
            <person name="Bode H.B."/>
            <person name="Bolten C.J."/>
            <person name="Choudhuri J.V."/>
            <person name="Doss S."/>
            <person name="Elnakady Y.A."/>
            <person name="Frank B."/>
            <person name="Gaigalat L."/>
            <person name="Goesmann A."/>
            <person name="Groeger C."/>
            <person name="Gross F."/>
            <person name="Jelsbak L."/>
            <person name="Jelsbak L."/>
            <person name="Kalinowski J."/>
            <person name="Kegler C."/>
            <person name="Knauber T."/>
            <person name="Konietzny S."/>
            <person name="Kopp M."/>
            <person name="Krause L."/>
            <person name="Krug D."/>
            <person name="Linke B."/>
            <person name="Mahmud T."/>
            <person name="Martinez-Arias R."/>
            <person name="McHardy A.C."/>
            <person name="Merai M."/>
            <person name="Meyer F."/>
            <person name="Mormann S."/>
            <person name="Munoz-Dorado J."/>
            <person name="Perez J."/>
            <person name="Pradella S."/>
            <person name="Rachid S."/>
            <person name="Raddatz G."/>
            <person name="Rosenau F."/>
            <person name="Rueckert C."/>
            <person name="Sasse F."/>
            <person name="Scharfe M."/>
            <person name="Schuster S.C."/>
            <person name="Suen G."/>
            <person name="Treuner-Lange A."/>
            <person name="Velicer G.J."/>
            <person name="Vorholter F.-J."/>
            <person name="Weissman K.J."/>
            <person name="Welch R.D."/>
            <person name="Wenzel S.C."/>
            <person name="Whitworth D.E."/>
            <person name="Wilhelm S."/>
            <person name="Wittmann C."/>
            <person name="Bloecker H."/>
            <person name="Puehler A."/>
            <person name="Mueller R."/>
        </authorList>
    </citation>
    <scope>NUCLEOTIDE SEQUENCE [LARGE SCALE GENOMIC DNA]</scope>
    <source>
        <strain>So ce56</strain>
    </source>
</reference>
<name>RS7_SORC5</name>
<dbReference type="EMBL" id="AM746676">
    <property type="protein sequence ID" value="CAN90996.1"/>
    <property type="molecule type" value="Genomic_DNA"/>
</dbReference>
<dbReference type="RefSeq" id="WP_012233474.1">
    <property type="nucleotide sequence ID" value="NC_010162.1"/>
</dbReference>
<dbReference type="SMR" id="A9ETC1"/>
<dbReference type="STRING" id="448385.sce0839"/>
<dbReference type="KEGG" id="scl:sce0839"/>
<dbReference type="eggNOG" id="COG0049">
    <property type="taxonomic scope" value="Bacteria"/>
</dbReference>
<dbReference type="HOGENOM" id="CLU_072226_1_1_7"/>
<dbReference type="OrthoDB" id="9807653at2"/>
<dbReference type="BioCyc" id="SCEL448385:SCE_RS04400-MONOMER"/>
<dbReference type="Proteomes" id="UP000002139">
    <property type="component" value="Chromosome"/>
</dbReference>
<dbReference type="GO" id="GO:0015935">
    <property type="term" value="C:small ribosomal subunit"/>
    <property type="evidence" value="ECO:0007669"/>
    <property type="project" value="InterPro"/>
</dbReference>
<dbReference type="GO" id="GO:0019843">
    <property type="term" value="F:rRNA binding"/>
    <property type="evidence" value="ECO:0007669"/>
    <property type="project" value="UniProtKB-UniRule"/>
</dbReference>
<dbReference type="GO" id="GO:0003735">
    <property type="term" value="F:structural constituent of ribosome"/>
    <property type="evidence" value="ECO:0007669"/>
    <property type="project" value="InterPro"/>
</dbReference>
<dbReference type="GO" id="GO:0000049">
    <property type="term" value="F:tRNA binding"/>
    <property type="evidence" value="ECO:0007669"/>
    <property type="project" value="UniProtKB-UniRule"/>
</dbReference>
<dbReference type="GO" id="GO:0006412">
    <property type="term" value="P:translation"/>
    <property type="evidence" value="ECO:0007669"/>
    <property type="project" value="UniProtKB-UniRule"/>
</dbReference>
<dbReference type="CDD" id="cd14869">
    <property type="entry name" value="uS7_Bacteria"/>
    <property type="match status" value="1"/>
</dbReference>
<dbReference type="FunFam" id="1.10.455.10:FF:000001">
    <property type="entry name" value="30S ribosomal protein S7"/>
    <property type="match status" value="1"/>
</dbReference>
<dbReference type="Gene3D" id="1.10.455.10">
    <property type="entry name" value="Ribosomal protein S7 domain"/>
    <property type="match status" value="1"/>
</dbReference>
<dbReference type="HAMAP" id="MF_00480_B">
    <property type="entry name" value="Ribosomal_uS7_B"/>
    <property type="match status" value="1"/>
</dbReference>
<dbReference type="InterPro" id="IPR000235">
    <property type="entry name" value="Ribosomal_uS7"/>
</dbReference>
<dbReference type="InterPro" id="IPR005717">
    <property type="entry name" value="Ribosomal_uS7_bac/org-type"/>
</dbReference>
<dbReference type="InterPro" id="IPR020606">
    <property type="entry name" value="Ribosomal_uS7_CS"/>
</dbReference>
<dbReference type="InterPro" id="IPR023798">
    <property type="entry name" value="Ribosomal_uS7_dom"/>
</dbReference>
<dbReference type="InterPro" id="IPR036823">
    <property type="entry name" value="Ribosomal_uS7_dom_sf"/>
</dbReference>
<dbReference type="NCBIfam" id="TIGR01029">
    <property type="entry name" value="rpsG_bact"/>
    <property type="match status" value="1"/>
</dbReference>
<dbReference type="PANTHER" id="PTHR11205">
    <property type="entry name" value="RIBOSOMAL PROTEIN S7"/>
    <property type="match status" value="1"/>
</dbReference>
<dbReference type="Pfam" id="PF00177">
    <property type="entry name" value="Ribosomal_S7"/>
    <property type="match status" value="1"/>
</dbReference>
<dbReference type="PIRSF" id="PIRSF002122">
    <property type="entry name" value="RPS7p_RPS7a_RPS5e_RPS7o"/>
    <property type="match status" value="1"/>
</dbReference>
<dbReference type="SUPFAM" id="SSF47973">
    <property type="entry name" value="Ribosomal protein S7"/>
    <property type="match status" value="1"/>
</dbReference>
<dbReference type="PROSITE" id="PS00052">
    <property type="entry name" value="RIBOSOMAL_S7"/>
    <property type="match status" value="1"/>
</dbReference>
<comment type="function">
    <text evidence="1">One of the primary rRNA binding proteins, it binds directly to 16S rRNA where it nucleates assembly of the head domain of the 30S subunit. Is located at the subunit interface close to the decoding center, probably blocks exit of the E-site tRNA.</text>
</comment>
<comment type="subunit">
    <text evidence="1">Part of the 30S ribosomal subunit. Contacts proteins S9 and S11.</text>
</comment>
<comment type="similarity">
    <text evidence="1">Belongs to the universal ribosomal protein uS7 family.</text>
</comment>
<evidence type="ECO:0000255" key="1">
    <source>
        <dbReference type="HAMAP-Rule" id="MF_00480"/>
    </source>
</evidence>
<evidence type="ECO:0000305" key="2"/>
<gene>
    <name evidence="1" type="primary">rpsG</name>
    <name type="ordered locus">sce0839</name>
</gene>
<accession>A9ETC1</accession>
<protein>
    <recommendedName>
        <fullName evidence="1">Small ribosomal subunit protein uS7</fullName>
    </recommendedName>
    <alternativeName>
        <fullName evidence="2">30S ribosomal protein S7</fullName>
    </alternativeName>
</protein>
<proteinExistence type="inferred from homology"/>
<feature type="chain" id="PRO_1000081306" description="Small ribosomal subunit protein uS7">
    <location>
        <begin position="1"/>
        <end position="156"/>
    </location>
</feature>
<keyword id="KW-1185">Reference proteome</keyword>
<keyword id="KW-0687">Ribonucleoprotein</keyword>
<keyword id="KW-0689">Ribosomal protein</keyword>
<keyword id="KW-0694">RNA-binding</keyword>
<keyword id="KW-0699">rRNA-binding</keyword>
<keyword id="KW-0820">tRNA-binding</keyword>
<sequence>MPRRREVPKRKIIPDPKYKDKLVAKFTNSLMQSGKKATAEGILYGAFDIVRDRFKEEPIDVFRKALDNVKPKLEVKSRRVGGATYQVPVEVRPERRVALAMRWLVTYSRGRGEKTMRERLAAELVDAAQNRGNAVKKRDDTHKMAEANKAFAHYRW</sequence>